<organism>
    <name type="scientific">Latilactobacillus sakei subsp. sakei (strain 23K)</name>
    <name type="common">Lactobacillus sakei subsp. sakei</name>
    <dbReference type="NCBI Taxonomy" id="314315"/>
    <lineage>
        <taxon>Bacteria</taxon>
        <taxon>Bacillati</taxon>
        <taxon>Bacillota</taxon>
        <taxon>Bacilli</taxon>
        <taxon>Lactobacillales</taxon>
        <taxon>Lactobacillaceae</taxon>
        <taxon>Latilactobacillus</taxon>
    </lineage>
</organism>
<reference key="1">
    <citation type="journal article" date="2005" name="Nat. Biotechnol.">
        <title>The complete genome sequence of the meat-borne lactic acid bacterium Lactobacillus sakei 23K.</title>
        <authorList>
            <person name="Chaillou S."/>
            <person name="Champomier-Verges M.-C."/>
            <person name="Cornet M."/>
            <person name="Crutz-Le Coq A.-M."/>
            <person name="Dudez A.-M."/>
            <person name="Martin V."/>
            <person name="Beaufils S."/>
            <person name="Darbon-Rongere E."/>
            <person name="Bossy R."/>
            <person name="Loux V."/>
            <person name="Zagorec M."/>
        </authorList>
    </citation>
    <scope>NUCLEOTIDE SEQUENCE [LARGE SCALE GENOMIC DNA]</scope>
    <source>
        <strain>23K</strain>
    </source>
</reference>
<proteinExistence type="inferred from homology"/>
<dbReference type="EC" id="3.5.3.6" evidence="1"/>
<dbReference type="EMBL" id="CR936503">
    <property type="protein sequence ID" value="CAI54671.1"/>
    <property type="molecule type" value="Genomic_DNA"/>
</dbReference>
<dbReference type="RefSeq" id="WP_011374079.1">
    <property type="nucleotide sequence ID" value="NC_007576.1"/>
</dbReference>
<dbReference type="SMR" id="Q38YQ6"/>
<dbReference type="STRING" id="314315.LCA_0370"/>
<dbReference type="KEGG" id="lsa:LCA_0370"/>
<dbReference type="eggNOG" id="COG2235">
    <property type="taxonomic scope" value="Bacteria"/>
</dbReference>
<dbReference type="HOGENOM" id="CLU_052662_0_1_9"/>
<dbReference type="OrthoDB" id="9807502at2"/>
<dbReference type="UniPathway" id="UPA00254">
    <property type="reaction ID" value="UER00364"/>
</dbReference>
<dbReference type="Proteomes" id="UP000002707">
    <property type="component" value="Chromosome"/>
</dbReference>
<dbReference type="GO" id="GO:0005737">
    <property type="term" value="C:cytoplasm"/>
    <property type="evidence" value="ECO:0007669"/>
    <property type="project" value="UniProtKB-SubCell"/>
</dbReference>
<dbReference type="GO" id="GO:0016990">
    <property type="term" value="F:arginine deiminase activity"/>
    <property type="evidence" value="ECO:0007669"/>
    <property type="project" value="UniProtKB-UniRule"/>
</dbReference>
<dbReference type="GO" id="GO:0019547">
    <property type="term" value="P:arginine catabolic process to ornithine"/>
    <property type="evidence" value="ECO:0007669"/>
    <property type="project" value="UniProtKB-UniRule"/>
</dbReference>
<dbReference type="GO" id="GO:0019546">
    <property type="term" value="P:arginine deiminase pathway"/>
    <property type="evidence" value="ECO:0007669"/>
    <property type="project" value="TreeGrafter"/>
</dbReference>
<dbReference type="Gene3D" id="1.10.3930.10">
    <property type="entry name" value="Arginine deiminase"/>
    <property type="match status" value="1"/>
</dbReference>
<dbReference type="Gene3D" id="3.75.10.10">
    <property type="entry name" value="L-arginine/glycine Amidinotransferase, Chain A"/>
    <property type="match status" value="1"/>
</dbReference>
<dbReference type="HAMAP" id="MF_00242">
    <property type="entry name" value="Arg_deiminase"/>
    <property type="match status" value="1"/>
</dbReference>
<dbReference type="InterPro" id="IPR003876">
    <property type="entry name" value="Arg_deiminase"/>
</dbReference>
<dbReference type="NCBIfam" id="TIGR01078">
    <property type="entry name" value="arcA"/>
    <property type="match status" value="1"/>
</dbReference>
<dbReference type="NCBIfam" id="NF002381">
    <property type="entry name" value="PRK01388.1"/>
    <property type="match status" value="1"/>
</dbReference>
<dbReference type="PANTHER" id="PTHR47271">
    <property type="entry name" value="ARGININE DEIMINASE"/>
    <property type="match status" value="1"/>
</dbReference>
<dbReference type="PANTHER" id="PTHR47271:SF2">
    <property type="entry name" value="ARGININE DEIMINASE"/>
    <property type="match status" value="1"/>
</dbReference>
<dbReference type="Pfam" id="PF02274">
    <property type="entry name" value="ADI"/>
    <property type="match status" value="1"/>
</dbReference>
<dbReference type="PIRSF" id="PIRSF006356">
    <property type="entry name" value="Arg_deiminase"/>
    <property type="match status" value="1"/>
</dbReference>
<dbReference type="PRINTS" id="PR01466">
    <property type="entry name" value="ARGDEIMINASE"/>
</dbReference>
<dbReference type="SUPFAM" id="SSF55909">
    <property type="entry name" value="Pentein"/>
    <property type="match status" value="1"/>
</dbReference>
<keyword id="KW-0056">Arginine metabolism</keyword>
<keyword id="KW-0963">Cytoplasm</keyword>
<keyword id="KW-0378">Hydrolase</keyword>
<keyword id="KW-1185">Reference proteome</keyword>
<comment type="catalytic activity">
    <reaction evidence="1">
        <text>L-arginine + H2O = L-citrulline + NH4(+)</text>
        <dbReference type="Rhea" id="RHEA:19597"/>
        <dbReference type="ChEBI" id="CHEBI:15377"/>
        <dbReference type="ChEBI" id="CHEBI:28938"/>
        <dbReference type="ChEBI" id="CHEBI:32682"/>
        <dbReference type="ChEBI" id="CHEBI:57743"/>
        <dbReference type="EC" id="3.5.3.6"/>
    </reaction>
</comment>
<comment type="pathway">
    <text evidence="1">Amino-acid degradation; L-arginine degradation via ADI pathway; carbamoyl phosphate from L-arginine: step 1/2.</text>
</comment>
<comment type="subcellular location">
    <subcellularLocation>
        <location evidence="1">Cytoplasm</location>
    </subcellularLocation>
</comment>
<comment type="similarity">
    <text evidence="1">Belongs to the arginine deiminase family.</text>
</comment>
<protein>
    <recommendedName>
        <fullName evidence="1">Arginine deiminase</fullName>
        <shortName evidence="1">ADI</shortName>
        <ecNumber evidence="1">3.5.3.6</ecNumber>
    </recommendedName>
    <alternativeName>
        <fullName evidence="1">Arginine dihydrolase</fullName>
        <shortName evidence="1">AD</shortName>
    </alternativeName>
</protein>
<accession>Q38YQ6</accession>
<sequence length="411" mass="46070">MTSPIHVNSEIGKLKTVLLKRPGKEVENITPDIMYRLLFDDIPYLPTIQKEHDQFAQTLRDNGVEVLYLENLAAEAIDAGDVKEAFLDKMLNESHIKSPQVQAALKDYLISMATLDMVEKIMAGVRTNEIDIKSKALIDVSADGDYPFYMDPMPNLYFTRDPAASMGDGLTINKMTFEARQRESMFMEVIMQHHPRFANQGAQVWRDRDHIDRMEGGDELILSDKVLAIGISQRTSAQSIEELAKVLFANHSGFEKILAIKIPHNHAMMHLDTVFTMIDYDKFTIHPGIQGAGGMVDTYILEPGNNDEIKITHQTDLEKVLRDALEVPELTLIPCGGGDAVVAPREQWNDGSNTLAIAPGVVVTYDRNYVSNENLRQYGIKVIEVPSSELSRGRGGPRCMSMPLVREDLKK</sequence>
<feature type="chain" id="PRO_1000005715" description="Arginine deiminase">
    <location>
        <begin position="1"/>
        <end position="411"/>
    </location>
</feature>
<feature type="active site" description="Amidino-cysteine intermediate" evidence="1">
    <location>
        <position position="399"/>
    </location>
</feature>
<gene>
    <name evidence="1" type="primary">arcA</name>
    <name type="ordered locus">LCA_0370</name>
</gene>
<name>ARCA_LATSS</name>
<evidence type="ECO:0000255" key="1">
    <source>
        <dbReference type="HAMAP-Rule" id="MF_00242"/>
    </source>
</evidence>